<accession>P47233</accession>
<comment type="catalytic activity">
    <reaction>
        <text>biphenyl-2,3-diol + O2 = 2-hydroxy-6-oxo-6-phenylhexa-2,4-dienoate + H(+)</text>
        <dbReference type="Rhea" id="RHEA:14413"/>
        <dbReference type="ChEBI" id="CHEBI:15378"/>
        <dbReference type="ChEBI" id="CHEBI:15379"/>
        <dbReference type="ChEBI" id="CHEBI:16205"/>
        <dbReference type="ChEBI" id="CHEBI:58284"/>
        <dbReference type="EC" id="1.13.11.39"/>
    </reaction>
</comment>
<comment type="cofactor">
    <cofactor>
        <name>Fe(2+)</name>
        <dbReference type="ChEBI" id="CHEBI:29033"/>
    </cofactor>
</comment>
<comment type="pathway">
    <text>Xenobiotic degradation; biphenyl degradation; 2-hydroxy-2,4-pentadienoate and benzoate from biphenyl: step 3/4.</text>
</comment>
<comment type="subunit">
    <text evidence="1">Homohexamer.</text>
</comment>
<comment type="similarity">
    <text evidence="3">Belongs to the extradiol ring-cleavage dioxygenase family.</text>
</comment>
<reference key="1">
    <citation type="journal article" date="1994" name="J. Biol. Chem.">
        <title>Analysis of three 2,3-dihydroxybiphenyl 1,2-dioxygenases found in Rhodococcus globerulus P6. Identification of a new family of extradiol dioxygenases.</title>
        <authorList>
            <person name="Asturias J.A."/>
            <person name="Eltis L.D."/>
            <person name="Prucha M."/>
            <person name="Timmis K.N."/>
        </authorList>
    </citation>
    <scope>NUCLEOTIDE SEQUENCE [GENOMIC DNA]</scope>
    <source>
        <strain>P6</strain>
    </source>
</reference>
<dbReference type="EC" id="1.13.11.39"/>
<dbReference type="EMBL" id="X75635">
    <property type="protein sequence ID" value="CAA53299.1"/>
    <property type="molecule type" value="Genomic_DNA"/>
</dbReference>
<dbReference type="PIR" id="D53419">
    <property type="entry name" value="D53419"/>
</dbReference>
<dbReference type="SMR" id="P47233"/>
<dbReference type="UniPathway" id="UPA00155">
    <property type="reaction ID" value="UER00252"/>
</dbReference>
<dbReference type="GO" id="GO:0018583">
    <property type="term" value="F:biphenyl-2,3-diol 1,2-dioxygenase activity"/>
    <property type="evidence" value="ECO:0007669"/>
    <property type="project" value="UniProtKB-EC"/>
</dbReference>
<dbReference type="GO" id="GO:0008198">
    <property type="term" value="F:ferrous iron binding"/>
    <property type="evidence" value="ECO:0007669"/>
    <property type="project" value="InterPro"/>
</dbReference>
<dbReference type="GO" id="GO:0009056">
    <property type="term" value="P:catabolic process"/>
    <property type="evidence" value="ECO:0007669"/>
    <property type="project" value="UniProtKB-KW"/>
</dbReference>
<dbReference type="CDD" id="cd08348">
    <property type="entry name" value="BphC2-C3-RGP6_C_like"/>
    <property type="match status" value="1"/>
</dbReference>
<dbReference type="Gene3D" id="3.10.180.10">
    <property type="entry name" value="2,3-Dihydroxybiphenyl 1,2-Dioxygenase, domain 1"/>
    <property type="match status" value="1"/>
</dbReference>
<dbReference type="InterPro" id="IPR029068">
    <property type="entry name" value="Glyas_Bleomycin-R_OHBP_Dase"/>
</dbReference>
<dbReference type="InterPro" id="IPR004360">
    <property type="entry name" value="Glyas_Fos-R_dOase_dom"/>
</dbReference>
<dbReference type="InterPro" id="IPR037523">
    <property type="entry name" value="VOC"/>
</dbReference>
<dbReference type="InterPro" id="IPR000486">
    <property type="entry name" value="Xdiol_ring_cleave_dOase_1/2"/>
</dbReference>
<dbReference type="PANTHER" id="PTHR43279">
    <property type="entry name" value="CATECHOL-2,3-DIOXYGENASE"/>
    <property type="match status" value="1"/>
</dbReference>
<dbReference type="PANTHER" id="PTHR43279:SF1">
    <property type="entry name" value="CATECHOL-2,3-DIOXYGENASE"/>
    <property type="match status" value="1"/>
</dbReference>
<dbReference type="Pfam" id="PF00903">
    <property type="entry name" value="Glyoxalase"/>
    <property type="match status" value="1"/>
</dbReference>
<dbReference type="SUPFAM" id="SSF54593">
    <property type="entry name" value="Glyoxalase/Bleomycin resistance protein/Dihydroxybiphenyl dioxygenase"/>
    <property type="match status" value="1"/>
</dbReference>
<dbReference type="PROSITE" id="PS00082">
    <property type="entry name" value="EXTRADIOL_DIOXYGENAS"/>
    <property type="match status" value="1"/>
</dbReference>
<dbReference type="PROSITE" id="PS51819">
    <property type="entry name" value="VOC"/>
    <property type="match status" value="1"/>
</dbReference>
<proteinExistence type="inferred from homology"/>
<keyword id="KW-0058">Aromatic hydrocarbons catabolism</keyword>
<keyword id="KW-0223">Dioxygenase</keyword>
<keyword id="KW-0408">Iron</keyword>
<keyword id="KW-0479">Metal-binding</keyword>
<keyword id="KW-0560">Oxidoreductase</keyword>
<gene>
    <name type="primary">bphC3</name>
</gene>
<sequence length="190" mass="21191">MTVTPRLAHFVLQTNQLPAMTQWYIDVLGAHVVYENPAMCFLTTDEEHHRVALFGPPGGGLPERTPATVGLAHTAFTFPTLGDLIDKYLQLRDKGIEPRVPVQHGVTTSLYYRDPDGNMVELQIDNFATPEESTDYMHGEEYTTDTIGPSFNPLALAEAYKAGVPESELTTRAWALKTEQINVMERMLTP</sequence>
<evidence type="ECO:0000250" key="1"/>
<evidence type="ECO:0000255" key="2">
    <source>
        <dbReference type="PROSITE-ProRule" id="PRU01163"/>
    </source>
</evidence>
<evidence type="ECO:0000305" key="3"/>
<feature type="initiator methionine" description="Removed" evidence="1">
    <location>
        <position position="1"/>
    </location>
</feature>
<feature type="chain" id="PRO_0000085039" description="Biphenyl-2,3-diol 1,2-dioxygenase 3">
    <location>
        <begin position="2"/>
        <end position="190"/>
    </location>
</feature>
<feature type="domain" description="VOC" evidence="2">
    <location>
        <begin position="6"/>
        <end position="125"/>
    </location>
</feature>
<feature type="binding site" evidence="1">
    <location>
        <position position="9"/>
    </location>
    <ligand>
        <name>Fe cation</name>
        <dbReference type="ChEBI" id="CHEBI:24875"/>
    </ligand>
</feature>
<feature type="binding site" evidence="1">
    <location>
        <position position="73"/>
    </location>
    <ligand>
        <name>Fe cation</name>
        <dbReference type="ChEBI" id="CHEBI:24875"/>
    </ligand>
</feature>
<feature type="binding site" evidence="1">
    <location>
        <position position="121"/>
    </location>
    <ligand>
        <name>Fe cation</name>
        <dbReference type="ChEBI" id="CHEBI:24875"/>
    </ligand>
</feature>
<organism>
    <name type="scientific">Rhodococcus globerulus</name>
    <dbReference type="NCBI Taxonomy" id="33008"/>
    <lineage>
        <taxon>Bacteria</taxon>
        <taxon>Bacillati</taxon>
        <taxon>Actinomycetota</taxon>
        <taxon>Actinomycetes</taxon>
        <taxon>Mycobacteriales</taxon>
        <taxon>Nocardiaceae</taxon>
        <taxon>Rhodococcus</taxon>
    </lineage>
</organism>
<name>BPHC3_RHOGO</name>
<protein>
    <recommendedName>
        <fullName>Biphenyl-2,3-diol 1,2-dioxygenase 3</fullName>
        <ecNumber>1.13.11.39</ecNumber>
    </recommendedName>
    <alternativeName>
        <fullName>2,3-dihydroxybiphenyl dioxygenase III</fullName>
        <shortName>DHBD III</shortName>
    </alternativeName>
    <alternativeName>
        <fullName>23OHBP oxygenase III</fullName>
    </alternativeName>
    <alternativeName>
        <fullName>Biphenyl-2,3-diol 1,2-dioxygenase III</fullName>
    </alternativeName>
</protein>